<keyword id="KW-0028">Amino-acid biosynthesis</keyword>
<keyword id="KW-0963">Cytoplasm</keyword>
<keyword id="KW-0368">Histidine biosynthesis</keyword>
<keyword id="KW-0413">Isomerase</keyword>
<keyword id="KW-1185">Reference proteome</keyword>
<reference key="1">
    <citation type="journal article" date="2010" name="BMC Genomics">
        <title>A genomic perspective on the potential of Actinobacillus succinogenes for industrial succinate production.</title>
        <authorList>
            <person name="McKinlay J.B."/>
            <person name="Laivenieks M."/>
            <person name="Schindler B.D."/>
            <person name="McKinlay A.A."/>
            <person name="Siddaramappa S."/>
            <person name="Challacombe J.F."/>
            <person name="Lowry S.R."/>
            <person name="Clum A."/>
            <person name="Lapidus A.L."/>
            <person name="Burkhart K.B."/>
            <person name="Harkins V."/>
            <person name="Vieille C."/>
        </authorList>
    </citation>
    <scope>NUCLEOTIDE SEQUENCE [LARGE SCALE GENOMIC DNA]</scope>
    <source>
        <strain>ATCC 55618 / DSM 22257 / CCUG 43843 / 130Z</strain>
    </source>
</reference>
<evidence type="ECO:0000255" key="1">
    <source>
        <dbReference type="HAMAP-Rule" id="MF_01014"/>
    </source>
</evidence>
<name>HIS4_ACTSZ</name>
<proteinExistence type="inferred from homology"/>
<feature type="chain" id="PRO_1000072930" description="1-(5-phosphoribosyl)-5-[(5-phosphoribosylamino)methylideneamino] imidazole-4-carboxamide isomerase">
    <location>
        <begin position="1"/>
        <end position="249"/>
    </location>
</feature>
<feature type="active site" description="Proton acceptor" evidence="1">
    <location>
        <position position="11"/>
    </location>
</feature>
<feature type="active site" description="Proton donor" evidence="1">
    <location>
        <position position="133"/>
    </location>
</feature>
<accession>A6VQ73</accession>
<dbReference type="EC" id="5.3.1.16" evidence="1"/>
<dbReference type="EMBL" id="CP000746">
    <property type="protein sequence ID" value="ABR75120.1"/>
    <property type="molecule type" value="Genomic_DNA"/>
</dbReference>
<dbReference type="RefSeq" id="WP_012073497.1">
    <property type="nucleotide sequence ID" value="NC_009655.1"/>
</dbReference>
<dbReference type="SMR" id="A6VQ73"/>
<dbReference type="STRING" id="339671.Asuc_1768"/>
<dbReference type="KEGG" id="asu:Asuc_1768"/>
<dbReference type="eggNOG" id="COG0106">
    <property type="taxonomic scope" value="Bacteria"/>
</dbReference>
<dbReference type="HOGENOM" id="CLU_048577_1_2_6"/>
<dbReference type="OrthoDB" id="9807749at2"/>
<dbReference type="UniPathway" id="UPA00031">
    <property type="reaction ID" value="UER00009"/>
</dbReference>
<dbReference type="Proteomes" id="UP000001114">
    <property type="component" value="Chromosome"/>
</dbReference>
<dbReference type="GO" id="GO:0005737">
    <property type="term" value="C:cytoplasm"/>
    <property type="evidence" value="ECO:0007669"/>
    <property type="project" value="UniProtKB-SubCell"/>
</dbReference>
<dbReference type="GO" id="GO:0003949">
    <property type="term" value="F:1-(5-phosphoribosyl)-5-[(5-phosphoribosylamino)methylideneamino]imidazole-4-carboxamide isomerase activity"/>
    <property type="evidence" value="ECO:0007669"/>
    <property type="project" value="UniProtKB-UniRule"/>
</dbReference>
<dbReference type="GO" id="GO:0000105">
    <property type="term" value="P:L-histidine biosynthetic process"/>
    <property type="evidence" value="ECO:0007669"/>
    <property type="project" value="UniProtKB-UniRule"/>
</dbReference>
<dbReference type="GO" id="GO:0000162">
    <property type="term" value="P:L-tryptophan biosynthetic process"/>
    <property type="evidence" value="ECO:0007669"/>
    <property type="project" value="TreeGrafter"/>
</dbReference>
<dbReference type="CDD" id="cd04732">
    <property type="entry name" value="HisA"/>
    <property type="match status" value="1"/>
</dbReference>
<dbReference type="FunFam" id="3.20.20.70:FF:000009">
    <property type="entry name" value="1-(5-phosphoribosyl)-5-[(5-phosphoribosylamino)methylideneamino] imidazole-4-carboxamide isomerase"/>
    <property type="match status" value="1"/>
</dbReference>
<dbReference type="Gene3D" id="3.20.20.70">
    <property type="entry name" value="Aldolase class I"/>
    <property type="match status" value="1"/>
</dbReference>
<dbReference type="HAMAP" id="MF_01014">
    <property type="entry name" value="HisA"/>
    <property type="match status" value="1"/>
</dbReference>
<dbReference type="InterPro" id="IPR013785">
    <property type="entry name" value="Aldolase_TIM"/>
</dbReference>
<dbReference type="InterPro" id="IPR006062">
    <property type="entry name" value="His_biosynth"/>
</dbReference>
<dbReference type="InterPro" id="IPR006063">
    <property type="entry name" value="HisA_bact_arch"/>
</dbReference>
<dbReference type="InterPro" id="IPR044524">
    <property type="entry name" value="Isoase_HisA-like"/>
</dbReference>
<dbReference type="InterPro" id="IPR023016">
    <property type="entry name" value="Isoase_HisA-like_bact"/>
</dbReference>
<dbReference type="InterPro" id="IPR011060">
    <property type="entry name" value="RibuloseP-bd_barrel"/>
</dbReference>
<dbReference type="NCBIfam" id="TIGR00007">
    <property type="entry name" value="1-(5-phosphoribosyl)-5-[(5-phosphoribosylamino)methylideneamino]imidazole-4-carboxamide isomerase"/>
    <property type="match status" value="1"/>
</dbReference>
<dbReference type="PANTHER" id="PTHR43090">
    <property type="entry name" value="1-(5-PHOSPHORIBOSYL)-5-[(5-PHOSPHORIBOSYLAMINO)METHYLIDENEAMINO] IMIDAZOLE-4-CARBOXAMIDE ISOMERASE"/>
    <property type="match status" value="1"/>
</dbReference>
<dbReference type="PANTHER" id="PTHR43090:SF2">
    <property type="entry name" value="1-(5-PHOSPHORIBOSYL)-5-[(5-PHOSPHORIBOSYLAMINO)METHYLIDENEAMINO] IMIDAZOLE-4-CARBOXAMIDE ISOMERASE"/>
    <property type="match status" value="1"/>
</dbReference>
<dbReference type="Pfam" id="PF00977">
    <property type="entry name" value="His_biosynth"/>
    <property type="match status" value="1"/>
</dbReference>
<dbReference type="SUPFAM" id="SSF51366">
    <property type="entry name" value="Ribulose-phoshate binding barrel"/>
    <property type="match status" value="1"/>
</dbReference>
<sequence>MKKSIIIPALDLIEGQVVRLYQGDYAQQTLYSDNPIAQFQCYVDQGAQQLHLVDLTGAKDPVKRQTELIGKIIEATKCKIQVGGGIRTEQDVADLLAVGANRVVIGSTAVKRPEMVKGWFEKYGAEKFVLALDVNIDASGQKIIAVSGWQEASGVSLEELIEDYQSVGLQHVLCTDISRDGTLAGSNVNLYKEICTKYPEIQFQSSGGIGSLADIAALKGLGVAGVIVGRALLEGKFNVAEAIECWQNG</sequence>
<protein>
    <recommendedName>
        <fullName evidence="1">1-(5-phosphoribosyl)-5-[(5-phosphoribosylamino)methylideneamino] imidazole-4-carboxamide isomerase</fullName>
        <ecNumber evidence="1">5.3.1.16</ecNumber>
    </recommendedName>
    <alternativeName>
        <fullName evidence="1">Phosphoribosylformimino-5-aminoimidazole carboxamide ribotide isomerase</fullName>
    </alternativeName>
</protein>
<comment type="catalytic activity">
    <reaction evidence="1">
        <text>1-(5-phospho-beta-D-ribosyl)-5-[(5-phospho-beta-D-ribosylamino)methylideneamino]imidazole-4-carboxamide = 5-[(5-phospho-1-deoxy-D-ribulos-1-ylimino)methylamino]-1-(5-phospho-beta-D-ribosyl)imidazole-4-carboxamide</text>
        <dbReference type="Rhea" id="RHEA:15469"/>
        <dbReference type="ChEBI" id="CHEBI:58435"/>
        <dbReference type="ChEBI" id="CHEBI:58525"/>
        <dbReference type="EC" id="5.3.1.16"/>
    </reaction>
</comment>
<comment type="pathway">
    <text evidence="1">Amino-acid biosynthesis; L-histidine biosynthesis; L-histidine from 5-phospho-alpha-D-ribose 1-diphosphate: step 4/9.</text>
</comment>
<comment type="subcellular location">
    <subcellularLocation>
        <location evidence="1">Cytoplasm</location>
    </subcellularLocation>
</comment>
<comment type="similarity">
    <text evidence="1">Belongs to the HisA/HisF family.</text>
</comment>
<gene>
    <name evidence="1" type="primary">hisA</name>
    <name type="ordered locus">Asuc_1768</name>
</gene>
<organism>
    <name type="scientific">Actinobacillus succinogenes (strain ATCC 55618 / DSM 22257 / CCUG 43843 / 130Z)</name>
    <dbReference type="NCBI Taxonomy" id="339671"/>
    <lineage>
        <taxon>Bacteria</taxon>
        <taxon>Pseudomonadati</taxon>
        <taxon>Pseudomonadota</taxon>
        <taxon>Gammaproteobacteria</taxon>
        <taxon>Pasteurellales</taxon>
        <taxon>Pasteurellaceae</taxon>
        <taxon>Actinobacillus</taxon>
    </lineage>
</organism>